<evidence type="ECO:0000250" key="1"/>
<evidence type="ECO:0000250" key="2">
    <source>
        <dbReference type="UniProtKB" id="P24605"/>
    </source>
</evidence>
<evidence type="ECO:0000269" key="3">
    <source>
    </source>
</evidence>
<evidence type="ECO:0000305" key="4"/>
<evidence type="ECO:0000305" key="5">
    <source>
    </source>
</evidence>
<comment type="subcellular location">
    <subcellularLocation>
        <location evidence="3">Secreted</location>
    </subcellularLocation>
</comment>
<comment type="tissue specificity">
    <text evidence="5">Expressed by the venom gland.</text>
</comment>
<comment type="similarity">
    <text evidence="4">Belongs to the phospholipase A2 family. Group I subfamily. D49 sub-subfamily.</text>
</comment>
<comment type="caution">
    <text evidence="4">Lacks one of the four calcium-binding sites (Gly-&gt;Ser in position 30) found in other family members.</text>
</comment>
<organism>
    <name type="scientific">Notechis scutatus scutatus</name>
    <name type="common">Mainland tiger snake</name>
    <name type="synonym">Common tiger snake</name>
    <dbReference type="NCBI Taxonomy" id="70142"/>
    <lineage>
        <taxon>Eukaryota</taxon>
        <taxon>Metazoa</taxon>
        <taxon>Chordata</taxon>
        <taxon>Craniata</taxon>
        <taxon>Vertebrata</taxon>
        <taxon>Euteleostomi</taxon>
        <taxon>Lepidosauria</taxon>
        <taxon>Squamata</taxon>
        <taxon>Bifurcata</taxon>
        <taxon>Unidentata</taxon>
        <taxon>Episquamata</taxon>
        <taxon>Toxicofera</taxon>
        <taxon>Serpentes</taxon>
        <taxon>Colubroidea</taxon>
        <taxon>Elapidae</taxon>
        <taxon>Hydrophiinae</taxon>
        <taxon>Notechis</taxon>
    </lineage>
</organism>
<accession>P00607</accession>
<name>PA2H1_NOTSC</name>
<feature type="chain" id="PRO_0000161674" description="Basic phospholipase A2 homolog 1" evidence="3">
    <location>
        <begin position="1"/>
        <end position="119"/>
    </location>
</feature>
<feature type="region of interest" description="Important for membrane-damaging activities in eukaryotes and bacteria; heparin-binding" evidence="2">
    <location>
        <begin position="107"/>
        <end position="117"/>
    </location>
</feature>
<feature type="disulfide bond" evidence="1">
    <location>
        <begin position="11"/>
        <end position="72"/>
    </location>
</feature>
<feature type="disulfide bond" evidence="2">
    <location>
        <begin position="27"/>
        <end position="118"/>
    </location>
</feature>
<feature type="disulfide bond" evidence="2">
    <location>
        <begin position="29"/>
        <end position="45"/>
    </location>
</feature>
<feature type="disulfide bond" evidence="2">
    <location>
        <begin position="44"/>
        <end position="99"/>
    </location>
</feature>
<feature type="disulfide bond" evidence="2">
    <location>
        <begin position="51"/>
        <end position="92"/>
    </location>
</feature>
<feature type="disulfide bond" evidence="2">
    <location>
        <begin position="61"/>
        <end position="85"/>
    </location>
</feature>
<feature type="disulfide bond" evidence="2">
    <location>
        <begin position="79"/>
        <end position="90"/>
    </location>
</feature>
<dbReference type="PIR" id="A00746">
    <property type="entry name" value="PSNOA1"/>
</dbReference>
<dbReference type="SMR" id="P00607"/>
<dbReference type="GO" id="GO:0005576">
    <property type="term" value="C:extracellular region"/>
    <property type="evidence" value="ECO:0007669"/>
    <property type="project" value="UniProtKB-SubCell"/>
</dbReference>
<dbReference type="GO" id="GO:0005509">
    <property type="term" value="F:calcium ion binding"/>
    <property type="evidence" value="ECO:0007669"/>
    <property type="project" value="InterPro"/>
</dbReference>
<dbReference type="GO" id="GO:0047498">
    <property type="term" value="F:calcium-dependent phospholipase A2 activity"/>
    <property type="evidence" value="ECO:0007669"/>
    <property type="project" value="TreeGrafter"/>
</dbReference>
<dbReference type="GO" id="GO:0005543">
    <property type="term" value="F:phospholipid binding"/>
    <property type="evidence" value="ECO:0007669"/>
    <property type="project" value="TreeGrafter"/>
</dbReference>
<dbReference type="GO" id="GO:0050482">
    <property type="term" value="P:arachidonate secretion"/>
    <property type="evidence" value="ECO:0007669"/>
    <property type="project" value="InterPro"/>
</dbReference>
<dbReference type="GO" id="GO:0016042">
    <property type="term" value="P:lipid catabolic process"/>
    <property type="evidence" value="ECO:0007669"/>
    <property type="project" value="InterPro"/>
</dbReference>
<dbReference type="GO" id="GO:0006644">
    <property type="term" value="P:phospholipid metabolic process"/>
    <property type="evidence" value="ECO:0007669"/>
    <property type="project" value="InterPro"/>
</dbReference>
<dbReference type="CDD" id="cd00125">
    <property type="entry name" value="PLA2c"/>
    <property type="match status" value="1"/>
</dbReference>
<dbReference type="FunFam" id="1.20.90.10:FF:000007">
    <property type="entry name" value="Acidic phospholipase A2"/>
    <property type="match status" value="1"/>
</dbReference>
<dbReference type="Gene3D" id="1.20.90.10">
    <property type="entry name" value="Phospholipase A2 domain"/>
    <property type="match status" value="1"/>
</dbReference>
<dbReference type="InterPro" id="IPR001211">
    <property type="entry name" value="PLipase_A2"/>
</dbReference>
<dbReference type="InterPro" id="IPR033112">
    <property type="entry name" value="PLipase_A2_Asp_AS"/>
</dbReference>
<dbReference type="InterPro" id="IPR016090">
    <property type="entry name" value="PLipase_A2_dom"/>
</dbReference>
<dbReference type="InterPro" id="IPR036444">
    <property type="entry name" value="PLipase_A2_dom_sf"/>
</dbReference>
<dbReference type="InterPro" id="IPR033113">
    <property type="entry name" value="PLipase_A2_His_AS"/>
</dbReference>
<dbReference type="PANTHER" id="PTHR11716:SF94">
    <property type="entry name" value="PHOSPHOLIPASE A2"/>
    <property type="match status" value="1"/>
</dbReference>
<dbReference type="PANTHER" id="PTHR11716">
    <property type="entry name" value="PHOSPHOLIPASE A2 FAMILY MEMBER"/>
    <property type="match status" value="1"/>
</dbReference>
<dbReference type="Pfam" id="PF00068">
    <property type="entry name" value="Phospholip_A2_1"/>
    <property type="match status" value="1"/>
</dbReference>
<dbReference type="PRINTS" id="PR00389">
    <property type="entry name" value="PHPHLIPASEA2"/>
</dbReference>
<dbReference type="SMART" id="SM00085">
    <property type="entry name" value="PA2c"/>
    <property type="match status" value="1"/>
</dbReference>
<dbReference type="SUPFAM" id="SSF48619">
    <property type="entry name" value="Phospholipase A2, PLA2"/>
    <property type="match status" value="1"/>
</dbReference>
<dbReference type="PROSITE" id="PS00119">
    <property type="entry name" value="PA2_ASP"/>
    <property type="match status" value="1"/>
</dbReference>
<dbReference type="PROSITE" id="PS00118">
    <property type="entry name" value="PA2_HIS"/>
    <property type="match status" value="1"/>
</dbReference>
<sequence>NLVQFSNMIQCANHGSRPSLAYADYGCYCSAGGSGTPVDELDRCCKTHDDCYARATKSYSCTPYWTLYSWQCIEKTPTCDSKTGCQRFVCDCDATAAKCFAKAPYNKENYNIDPKKRCQ</sequence>
<protein>
    <recommendedName>
        <fullName>Basic phospholipase A2 homolog 1</fullName>
        <shortName>svPLA2 homolog</shortName>
    </recommendedName>
    <alternativeName>
        <fullName>Notechis II-1</fullName>
    </alternativeName>
</protein>
<reference key="1">
    <citation type="journal article" date="1980" name="Eur. J. Biochem.">
        <title>Complete amino-acid sequence of a non-neurotoxic, non-enzymatic phospholipase A2 homolog from the venom of the Australian tiger snake Notechis scutatus scutatus.</title>
        <authorList>
            <person name="Lind P."/>
            <person name="Eaker D."/>
        </authorList>
    </citation>
    <scope>PROTEIN SEQUENCE</scope>
    <scope>SUBCELLULAR LOCATION</scope>
    <source>
        <tissue>Venom</tissue>
    </source>
</reference>
<keyword id="KW-0903">Direct protein sequencing</keyword>
<keyword id="KW-1015">Disulfide bond</keyword>
<keyword id="KW-0964">Secreted</keyword>
<proteinExistence type="evidence at protein level"/>